<sequence length="466" mass="53685">MITLYNTLTRQKEVFKPIEPGKVKMYVCGPTVYNYIHIGNARPAINYDVVRRYFEYQGYNVEYVSNFTDVDDKLIKRSQELNQSVPEIAEKYIAAFHEDVGALNVRKATSNPRVMDHMDDIIQFIKDLVDQGYAYESGGDVYFRTRKFEGYGKLSHQSIDDLKVGARIDAGEHKEDALDFTLWKKAKPGEISWDSPFGEGRPGWHIECSVMAFHELGPTIDIHAGGSDLQFPHHENEIAQSEAHNHAPFANYWMHNGFINIDNEKMSKSLGNFILVHDIIKEVDPDVLRFFMISVHYRSPINYNLELVESARSGLERIRNSYQLIEERAQIATNIENQQTYIDQIDAILNRFETVMNDDFNTANAITAWYDLAKLANKYVLENTTSTEVIDKFKAVYQIFSDVLGVPLKSKNADELLDEDVEKLIEERNEARKNKDFARADEIRDMLKSQNIILEDTPQGVRFKRG</sequence>
<proteinExistence type="inferred from homology"/>
<protein>
    <recommendedName>
        <fullName evidence="1">Cysteine--tRNA ligase</fullName>
        <ecNumber evidence="1">6.1.1.16</ecNumber>
    </recommendedName>
    <alternativeName>
        <fullName evidence="1">Cysteinyl-tRNA synthetase</fullName>
        <shortName evidence="1">CysRS</shortName>
    </alternativeName>
</protein>
<keyword id="KW-0030">Aminoacyl-tRNA synthetase</keyword>
<keyword id="KW-0067">ATP-binding</keyword>
<keyword id="KW-0963">Cytoplasm</keyword>
<keyword id="KW-0436">Ligase</keyword>
<keyword id="KW-0479">Metal-binding</keyword>
<keyword id="KW-0547">Nucleotide-binding</keyword>
<keyword id="KW-0648">Protein biosynthesis</keyword>
<keyword id="KW-0862">Zinc</keyword>
<evidence type="ECO:0000255" key="1">
    <source>
        <dbReference type="HAMAP-Rule" id="MF_00041"/>
    </source>
</evidence>
<reference key="1">
    <citation type="journal article" date="2008" name="J. Bacteriol.">
        <title>Genome sequence of Staphylococcus aureus strain Newman and comparative analysis of staphylococcal genomes: polymorphism and evolution of two major pathogenicity islands.</title>
        <authorList>
            <person name="Baba T."/>
            <person name="Bae T."/>
            <person name="Schneewind O."/>
            <person name="Takeuchi F."/>
            <person name="Hiramatsu K."/>
        </authorList>
    </citation>
    <scope>NUCLEOTIDE SEQUENCE [LARGE SCALE GENOMIC DNA]</scope>
    <source>
        <strain>Newman</strain>
    </source>
</reference>
<gene>
    <name evidence="1" type="primary">cysS</name>
    <name type="ordered locus">NWMN_0492</name>
</gene>
<accession>A6QEI2</accession>
<organism>
    <name type="scientific">Staphylococcus aureus (strain Newman)</name>
    <dbReference type="NCBI Taxonomy" id="426430"/>
    <lineage>
        <taxon>Bacteria</taxon>
        <taxon>Bacillati</taxon>
        <taxon>Bacillota</taxon>
        <taxon>Bacilli</taxon>
        <taxon>Bacillales</taxon>
        <taxon>Staphylococcaceae</taxon>
        <taxon>Staphylococcus</taxon>
    </lineage>
</organism>
<dbReference type="EC" id="6.1.1.16" evidence="1"/>
<dbReference type="EMBL" id="AP009351">
    <property type="protein sequence ID" value="BAF66764.1"/>
    <property type="molecule type" value="Genomic_DNA"/>
</dbReference>
<dbReference type="RefSeq" id="WP_000631963.1">
    <property type="nucleotide sequence ID" value="NZ_JBBIAE010000002.1"/>
</dbReference>
<dbReference type="SMR" id="A6QEI2"/>
<dbReference type="KEGG" id="sae:NWMN_0492"/>
<dbReference type="HOGENOM" id="CLU_013528_0_1_9"/>
<dbReference type="Proteomes" id="UP000006386">
    <property type="component" value="Chromosome"/>
</dbReference>
<dbReference type="GO" id="GO:0005829">
    <property type="term" value="C:cytosol"/>
    <property type="evidence" value="ECO:0007669"/>
    <property type="project" value="TreeGrafter"/>
</dbReference>
<dbReference type="GO" id="GO:0005524">
    <property type="term" value="F:ATP binding"/>
    <property type="evidence" value="ECO:0007669"/>
    <property type="project" value="UniProtKB-UniRule"/>
</dbReference>
<dbReference type="GO" id="GO:0004817">
    <property type="term" value="F:cysteine-tRNA ligase activity"/>
    <property type="evidence" value="ECO:0007669"/>
    <property type="project" value="UniProtKB-UniRule"/>
</dbReference>
<dbReference type="GO" id="GO:0008270">
    <property type="term" value="F:zinc ion binding"/>
    <property type="evidence" value="ECO:0007669"/>
    <property type="project" value="UniProtKB-UniRule"/>
</dbReference>
<dbReference type="GO" id="GO:0006423">
    <property type="term" value="P:cysteinyl-tRNA aminoacylation"/>
    <property type="evidence" value="ECO:0007669"/>
    <property type="project" value="UniProtKB-UniRule"/>
</dbReference>
<dbReference type="CDD" id="cd00672">
    <property type="entry name" value="CysRS_core"/>
    <property type="match status" value="1"/>
</dbReference>
<dbReference type="FunFam" id="1.20.120.1910:FF:000002">
    <property type="entry name" value="Cysteine--tRNA ligase"/>
    <property type="match status" value="1"/>
</dbReference>
<dbReference type="FunFam" id="3.40.50.620:FF:000009">
    <property type="entry name" value="Cysteine--tRNA ligase"/>
    <property type="match status" value="1"/>
</dbReference>
<dbReference type="Gene3D" id="1.20.120.1910">
    <property type="entry name" value="Cysteine-tRNA ligase, C-terminal anti-codon recognition domain"/>
    <property type="match status" value="1"/>
</dbReference>
<dbReference type="Gene3D" id="3.40.50.620">
    <property type="entry name" value="HUPs"/>
    <property type="match status" value="1"/>
</dbReference>
<dbReference type="HAMAP" id="MF_00041">
    <property type="entry name" value="Cys_tRNA_synth"/>
    <property type="match status" value="1"/>
</dbReference>
<dbReference type="InterPro" id="IPR015803">
    <property type="entry name" value="Cys-tRNA-ligase"/>
</dbReference>
<dbReference type="InterPro" id="IPR015273">
    <property type="entry name" value="Cys-tRNA-synt_Ia_DALR"/>
</dbReference>
<dbReference type="InterPro" id="IPR024909">
    <property type="entry name" value="Cys-tRNA/MSH_ligase"/>
</dbReference>
<dbReference type="InterPro" id="IPR056411">
    <property type="entry name" value="CysS_C"/>
</dbReference>
<dbReference type="InterPro" id="IPR014729">
    <property type="entry name" value="Rossmann-like_a/b/a_fold"/>
</dbReference>
<dbReference type="InterPro" id="IPR032678">
    <property type="entry name" value="tRNA-synt_1_cat_dom"/>
</dbReference>
<dbReference type="InterPro" id="IPR009080">
    <property type="entry name" value="tRNAsynth_Ia_anticodon-bd"/>
</dbReference>
<dbReference type="NCBIfam" id="TIGR00435">
    <property type="entry name" value="cysS"/>
    <property type="match status" value="1"/>
</dbReference>
<dbReference type="PANTHER" id="PTHR10890:SF3">
    <property type="entry name" value="CYSTEINE--TRNA LIGASE, CYTOPLASMIC"/>
    <property type="match status" value="1"/>
</dbReference>
<dbReference type="PANTHER" id="PTHR10890">
    <property type="entry name" value="CYSTEINYL-TRNA SYNTHETASE"/>
    <property type="match status" value="1"/>
</dbReference>
<dbReference type="Pfam" id="PF23493">
    <property type="entry name" value="CysS_C"/>
    <property type="match status" value="1"/>
</dbReference>
<dbReference type="Pfam" id="PF09190">
    <property type="entry name" value="DALR_2"/>
    <property type="match status" value="1"/>
</dbReference>
<dbReference type="Pfam" id="PF01406">
    <property type="entry name" value="tRNA-synt_1e"/>
    <property type="match status" value="1"/>
</dbReference>
<dbReference type="PRINTS" id="PR00983">
    <property type="entry name" value="TRNASYNTHCYS"/>
</dbReference>
<dbReference type="SMART" id="SM00840">
    <property type="entry name" value="DALR_2"/>
    <property type="match status" value="1"/>
</dbReference>
<dbReference type="SUPFAM" id="SSF47323">
    <property type="entry name" value="Anticodon-binding domain of a subclass of class I aminoacyl-tRNA synthetases"/>
    <property type="match status" value="1"/>
</dbReference>
<dbReference type="SUPFAM" id="SSF52374">
    <property type="entry name" value="Nucleotidylyl transferase"/>
    <property type="match status" value="1"/>
</dbReference>
<name>SYC_STAAE</name>
<feature type="chain" id="PRO_1000071078" description="Cysteine--tRNA ligase">
    <location>
        <begin position="1"/>
        <end position="466"/>
    </location>
</feature>
<feature type="short sequence motif" description="'HIGH' region">
    <location>
        <begin position="30"/>
        <end position="40"/>
    </location>
</feature>
<feature type="short sequence motif" description="'KMSKS' region">
    <location>
        <begin position="265"/>
        <end position="269"/>
    </location>
</feature>
<feature type="binding site" evidence="1">
    <location>
        <position position="28"/>
    </location>
    <ligand>
        <name>Zn(2+)</name>
        <dbReference type="ChEBI" id="CHEBI:29105"/>
    </ligand>
</feature>
<feature type="binding site" evidence="1">
    <location>
        <position position="208"/>
    </location>
    <ligand>
        <name>Zn(2+)</name>
        <dbReference type="ChEBI" id="CHEBI:29105"/>
    </ligand>
</feature>
<feature type="binding site" evidence="1">
    <location>
        <position position="233"/>
    </location>
    <ligand>
        <name>Zn(2+)</name>
        <dbReference type="ChEBI" id="CHEBI:29105"/>
    </ligand>
</feature>
<feature type="binding site" evidence="1">
    <location>
        <position position="237"/>
    </location>
    <ligand>
        <name>Zn(2+)</name>
        <dbReference type="ChEBI" id="CHEBI:29105"/>
    </ligand>
</feature>
<feature type="binding site" evidence="1">
    <location>
        <position position="268"/>
    </location>
    <ligand>
        <name>ATP</name>
        <dbReference type="ChEBI" id="CHEBI:30616"/>
    </ligand>
</feature>
<comment type="catalytic activity">
    <reaction evidence="1">
        <text>tRNA(Cys) + L-cysteine + ATP = L-cysteinyl-tRNA(Cys) + AMP + diphosphate</text>
        <dbReference type="Rhea" id="RHEA:17773"/>
        <dbReference type="Rhea" id="RHEA-COMP:9661"/>
        <dbReference type="Rhea" id="RHEA-COMP:9679"/>
        <dbReference type="ChEBI" id="CHEBI:30616"/>
        <dbReference type="ChEBI" id="CHEBI:33019"/>
        <dbReference type="ChEBI" id="CHEBI:35235"/>
        <dbReference type="ChEBI" id="CHEBI:78442"/>
        <dbReference type="ChEBI" id="CHEBI:78517"/>
        <dbReference type="ChEBI" id="CHEBI:456215"/>
        <dbReference type="EC" id="6.1.1.16"/>
    </reaction>
</comment>
<comment type="cofactor">
    <cofactor evidence="1">
        <name>Zn(2+)</name>
        <dbReference type="ChEBI" id="CHEBI:29105"/>
    </cofactor>
    <text evidence="1">Binds 1 zinc ion per subunit.</text>
</comment>
<comment type="subunit">
    <text evidence="1">Monomer.</text>
</comment>
<comment type="subcellular location">
    <subcellularLocation>
        <location evidence="1">Cytoplasm</location>
    </subcellularLocation>
</comment>
<comment type="similarity">
    <text evidence="1">Belongs to the class-I aminoacyl-tRNA synthetase family.</text>
</comment>